<sequence>MGTEEKMTRSDIDLNEPAFYNNRELSWLAFNERVLEEAIDERNPLLERLKFLAIFSSNLDEFFMVRVAGLKDQVKAGFNKPENKAGLTPKQQLRQISERNHQLVQLQDRVYTETIIPMLSQHGIQFLTFDELSDKQRSFLEKRFDHYIFPVLTPMAVDAYRPFPMLLNKSLNLAVVIKNKESDSREQLAIVQVPSVLNRFILLPCEDGKNQFILLENVISYFIEKLFKGYTVKSVSPFRITRNADLPIHEEGARDLLREIEKELKKRKWGAAVRLEMQEGLMDPNVLKLLLDVLEIHKNDVYSLQGPLDLTFLFKLYNRLIVDYEHLTNETLIPQPPEDLIGETNIFDAILKRDIFLHHPYESFQPVIDFIATAAEDPQVLAIKQTLYRVSGDSPIINALARAAENGKQVTVLVELKARFDEENNIQWAKKLEKSGVHVIYGITGLKTHSKITLVVRHHNDEIQRFVHLGTGNYNDSTAKLYTDMGLLTADEEFGIDATNFFNHLSGYSEKPQWHHLSTAPFEIRDTFLDLIDQEIECHKQNGNGHIIAKMNSLTDKPIILKLYEASRAGVRIELIVRGICCLRPGIPNVSEHIRVFSIVDRFLEHSRIFYFHHGGDDKVFLSSADWMTRNMEKRIEILFPIYQQSTKRRIIEILTITLLDNMKAREQNQFGQYRYVKRNPSEQPVQSQLTFFDMASRFSDSEAE</sequence>
<proteinExistence type="inferred from homology"/>
<feature type="chain" id="PRO_0000128635" description="Polyphosphate kinase">
    <location>
        <begin position="1"/>
        <end position="705"/>
    </location>
</feature>
<feature type="active site" description="Phosphohistidine intermediate" evidence="1">
    <location>
        <position position="449"/>
    </location>
</feature>
<feature type="binding site" evidence="1">
    <location>
        <position position="58"/>
    </location>
    <ligand>
        <name>ATP</name>
        <dbReference type="ChEBI" id="CHEBI:30616"/>
    </ligand>
</feature>
<feature type="binding site" evidence="1">
    <location>
        <position position="389"/>
    </location>
    <ligand>
        <name>Mg(2+)</name>
        <dbReference type="ChEBI" id="CHEBI:18420"/>
    </ligand>
</feature>
<feature type="binding site" evidence="1">
    <location>
        <position position="419"/>
    </location>
    <ligand>
        <name>Mg(2+)</name>
        <dbReference type="ChEBI" id="CHEBI:18420"/>
    </ligand>
</feature>
<feature type="binding site" evidence="1">
    <location>
        <position position="482"/>
    </location>
    <ligand>
        <name>ATP</name>
        <dbReference type="ChEBI" id="CHEBI:30616"/>
    </ligand>
</feature>
<feature type="binding site" evidence="1">
    <location>
        <position position="578"/>
    </location>
    <ligand>
        <name>ATP</name>
        <dbReference type="ChEBI" id="CHEBI:30616"/>
    </ligand>
</feature>
<feature type="binding site" evidence="1">
    <location>
        <position position="606"/>
    </location>
    <ligand>
        <name>ATP</name>
        <dbReference type="ChEBI" id="CHEBI:30616"/>
    </ligand>
</feature>
<gene>
    <name evidence="1" type="primary">ppk</name>
    <name type="ordered locus">BH1392</name>
</gene>
<keyword id="KW-0067">ATP-binding</keyword>
<keyword id="KW-0418">Kinase</keyword>
<keyword id="KW-0460">Magnesium</keyword>
<keyword id="KW-0479">Metal-binding</keyword>
<keyword id="KW-0547">Nucleotide-binding</keyword>
<keyword id="KW-0597">Phosphoprotein</keyword>
<keyword id="KW-1185">Reference proteome</keyword>
<keyword id="KW-0808">Transferase</keyword>
<comment type="function">
    <text evidence="1">Catalyzes the reversible transfer of the terminal phosphate of ATP to form a long-chain polyphosphate (polyP).</text>
</comment>
<comment type="catalytic activity">
    <reaction evidence="1">
        <text>[phosphate](n) + ATP = [phosphate](n+1) + ADP</text>
        <dbReference type="Rhea" id="RHEA:19573"/>
        <dbReference type="Rhea" id="RHEA-COMP:9859"/>
        <dbReference type="Rhea" id="RHEA-COMP:14280"/>
        <dbReference type="ChEBI" id="CHEBI:16838"/>
        <dbReference type="ChEBI" id="CHEBI:30616"/>
        <dbReference type="ChEBI" id="CHEBI:456216"/>
        <dbReference type="EC" id="2.7.4.1"/>
    </reaction>
</comment>
<comment type="cofactor">
    <cofactor evidence="1">
        <name>Mg(2+)</name>
        <dbReference type="ChEBI" id="CHEBI:18420"/>
    </cofactor>
</comment>
<comment type="PTM">
    <text evidence="1">An intermediate of this reaction is the autophosphorylated ppk in which a phosphate is covalently linked to a histidine residue through a N-P bond.</text>
</comment>
<comment type="similarity">
    <text evidence="1">Belongs to the polyphosphate kinase 1 (PPK1) family.</text>
</comment>
<reference key="1">
    <citation type="journal article" date="2000" name="Nucleic Acids Res.">
        <title>Complete genome sequence of the alkaliphilic bacterium Bacillus halodurans and genomic sequence comparison with Bacillus subtilis.</title>
        <authorList>
            <person name="Takami H."/>
            <person name="Nakasone K."/>
            <person name="Takaki Y."/>
            <person name="Maeno G."/>
            <person name="Sasaki R."/>
            <person name="Masui N."/>
            <person name="Fuji F."/>
            <person name="Hirama C."/>
            <person name="Nakamura Y."/>
            <person name="Ogasawara N."/>
            <person name="Kuhara S."/>
            <person name="Horikoshi K."/>
        </authorList>
    </citation>
    <scope>NUCLEOTIDE SEQUENCE [LARGE SCALE GENOMIC DNA]</scope>
    <source>
        <strain>ATCC BAA-125 / DSM 18197 / FERM 7344 / JCM 9153 / C-125</strain>
    </source>
</reference>
<name>PPK1_HALH5</name>
<accession>Q9KD27</accession>
<organism>
    <name type="scientific">Halalkalibacterium halodurans (strain ATCC BAA-125 / DSM 18197 / FERM 7344 / JCM 9153 / C-125)</name>
    <name type="common">Bacillus halodurans</name>
    <dbReference type="NCBI Taxonomy" id="272558"/>
    <lineage>
        <taxon>Bacteria</taxon>
        <taxon>Bacillati</taxon>
        <taxon>Bacillota</taxon>
        <taxon>Bacilli</taxon>
        <taxon>Bacillales</taxon>
        <taxon>Bacillaceae</taxon>
        <taxon>Halalkalibacterium (ex Joshi et al. 2022)</taxon>
    </lineage>
</organism>
<protein>
    <recommendedName>
        <fullName evidence="1">Polyphosphate kinase</fullName>
        <ecNumber evidence="1">2.7.4.1</ecNumber>
    </recommendedName>
    <alternativeName>
        <fullName evidence="1">ATP-polyphosphate phosphotransferase</fullName>
    </alternativeName>
    <alternativeName>
        <fullName evidence="1">Polyphosphoric acid kinase</fullName>
    </alternativeName>
</protein>
<dbReference type="EC" id="2.7.4.1" evidence="1"/>
<dbReference type="EMBL" id="BA000004">
    <property type="protein sequence ID" value="BAB05111.1"/>
    <property type="molecule type" value="Genomic_DNA"/>
</dbReference>
<dbReference type="PIR" id="H83823">
    <property type="entry name" value="H83823"/>
</dbReference>
<dbReference type="RefSeq" id="WP_010897557.1">
    <property type="nucleotide sequence ID" value="NC_002570.2"/>
</dbReference>
<dbReference type="SMR" id="Q9KD27"/>
<dbReference type="STRING" id="272558.gene:10727286"/>
<dbReference type="DNASU" id="891215"/>
<dbReference type="KEGG" id="bha:BH1392"/>
<dbReference type="eggNOG" id="COG0855">
    <property type="taxonomic scope" value="Bacteria"/>
</dbReference>
<dbReference type="HOGENOM" id="CLU_009678_5_0_9"/>
<dbReference type="OrthoDB" id="9761456at2"/>
<dbReference type="Proteomes" id="UP000001258">
    <property type="component" value="Chromosome"/>
</dbReference>
<dbReference type="GO" id="GO:0009358">
    <property type="term" value="C:polyphosphate kinase complex"/>
    <property type="evidence" value="ECO:0007669"/>
    <property type="project" value="InterPro"/>
</dbReference>
<dbReference type="GO" id="GO:0005524">
    <property type="term" value="F:ATP binding"/>
    <property type="evidence" value="ECO:0007669"/>
    <property type="project" value="UniProtKB-KW"/>
</dbReference>
<dbReference type="GO" id="GO:0046872">
    <property type="term" value="F:metal ion binding"/>
    <property type="evidence" value="ECO:0007669"/>
    <property type="project" value="UniProtKB-KW"/>
</dbReference>
<dbReference type="GO" id="GO:0008976">
    <property type="term" value="F:polyphosphate kinase activity"/>
    <property type="evidence" value="ECO:0007669"/>
    <property type="project" value="UniProtKB-UniRule"/>
</dbReference>
<dbReference type="GO" id="GO:0006799">
    <property type="term" value="P:polyphosphate biosynthetic process"/>
    <property type="evidence" value="ECO:0007669"/>
    <property type="project" value="UniProtKB-UniRule"/>
</dbReference>
<dbReference type="CDD" id="cd09165">
    <property type="entry name" value="PLDc_PaPPK1_C1_like"/>
    <property type="match status" value="1"/>
</dbReference>
<dbReference type="CDD" id="cd09168">
    <property type="entry name" value="PLDc_PaPPK1_C2_like"/>
    <property type="match status" value="1"/>
</dbReference>
<dbReference type="FunFam" id="3.30.870.10:FF:000001">
    <property type="entry name" value="Polyphosphate kinase"/>
    <property type="match status" value="1"/>
</dbReference>
<dbReference type="Gene3D" id="3.30.870.10">
    <property type="entry name" value="Endonuclease Chain A"/>
    <property type="match status" value="2"/>
</dbReference>
<dbReference type="Gene3D" id="3.30.1840.10">
    <property type="entry name" value="Polyphosphate kinase middle domain"/>
    <property type="match status" value="1"/>
</dbReference>
<dbReference type="Gene3D" id="1.20.58.310">
    <property type="entry name" value="Polyphosphate kinase N-terminal domain"/>
    <property type="match status" value="1"/>
</dbReference>
<dbReference type="HAMAP" id="MF_00347">
    <property type="entry name" value="Polyphosphate_kinase"/>
    <property type="match status" value="1"/>
</dbReference>
<dbReference type="InterPro" id="IPR003414">
    <property type="entry name" value="PP_kinase"/>
</dbReference>
<dbReference type="InterPro" id="IPR041108">
    <property type="entry name" value="PP_kinase_C_1"/>
</dbReference>
<dbReference type="InterPro" id="IPR024953">
    <property type="entry name" value="PP_kinase_middle"/>
</dbReference>
<dbReference type="InterPro" id="IPR036830">
    <property type="entry name" value="PP_kinase_middle_dom_sf"/>
</dbReference>
<dbReference type="InterPro" id="IPR025200">
    <property type="entry name" value="PPK_C_dom2"/>
</dbReference>
<dbReference type="InterPro" id="IPR025198">
    <property type="entry name" value="PPK_N_dom"/>
</dbReference>
<dbReference type="InterPro" id="IPR036832">
    <property type="entry name" value="PPK_N_dom_sf"/>
</dbReference>
<dbReference type="NCBIfam" id="TIGR03705">
    <property type="entry name" value="poly_P_kin"/>
    <property type="match status" value="1"/>
</dbReference>
<dbReference type="NCBIfam" id="NF003917">
    <property type="entry name" value="PRK05443.1-1"/>
    <property type="match status" value="1"/>
</dbReference>
<dbReference type="NCBIfam" id="NF003918">
    <property type="entry name" value="PRK05443.1-2"/>
    <property type="match status" value="1"/>
</dbReference>
<dbReference type="NCBIfam" id="NF003920">
    <property type="entry name" value="PRK05443.2-1"/>
    <property type="match status" value="1"/>
</dbReference>
<dbReference type="NCBIfam" id="NF003921">
    <property type="entry name" value="PRK05443.2-2"/>
    <property type="match status" value="1"/>
</dbReference>
<dbReference type="PANTHER" id="PTHR30218">
    <property type="entry name" value="POLYPHOSPHATE KINASE"/>
    <property type="match status" value="1"/>
</dbReference>
<dbReference type="PANTHER" id="PTHR30218:SF0">
    <property type="entry name" value="POLYPHOSPHATE KINASE"/>
    <property type="match status" value="1"/>
</dbReference>
<dbReference type="Pfam" id="PF02503">
    <property type="entry name" value="PP_kinase"/>
    <property type="match status" value="1"/>
</dbReference>
<dbReference type="Pfam" id="PF13090">
    <property type="entry name" value="PP_kinase_C"/>
    <property type="match status" value="1"/>
</dbReference>
<dbReference type="Pfam" id="PF17941">
    <property type="entry name" value="PP_kinase_C_1"/>
    <property type="match status" value="1"/>
</dbReference>
<dbReference type="Pfam" id="PF13089">
    <property type="entry name" value="PP_kinase_N"/>
    <property type="match status" value="1"/>
</dbReference>
<dbReference type="PIRSF" id="PIRSF015589">
    <property type="entry name" value="PP_kinase"/>
    <property type="match status" value="1"/>
</dbReference>
<dbReference type="SUPFAM" id="SSF56024">
    <property type="entry name" value="Phospholipase D/nuclease"/>
    <property type="match status" value="2"/>
</dbReference>
<dbReference type="SUPFAM" id="SSF143724">
    <property type="entry name" value="PHP14-like"/>
    <property type="match status" value="1"/>
</dbReference>
<dbReference type="SUPFAM" id="SSF140356">
    <property type="entry name" value="PPK N-terminal domain-like"/>
    <property type="match status" value="1"/>
</dbReference>
<evidence type="ECO:0000255" key="1">
    <source>
        <dbReference type="HAMAP-Rule" id="MF_00347"/>
    </source>
</evidence>